<organism>
    <name type="scientific">Staphylococcus aureus (strain NCTC 8325 / PS 47)</name>
    <dbReference type="NCBI Taxonomy" id="93061"/>
    <lineage>
        <taxon>Bacteria</taxon>
        <taxon>Bacillati</taxon>
        <taxon>Bacillota</taxon>
        <taxon>Bacilli</taxon>
        <taxon>Bacillales</taxon>
        <taxon>Staphylococcaceae</taxon>
        <taxon>Staphylococcus</taxon>
    </lineage>
</organism>
<protein>
    <recommendedName>
        <fullName evidence="2">Enterotoxin-like toxin X</fullName>
    </recommendedName>
</protein>
<accession>Q2G107</accession>
<reference key="1">
    <citation type="book" date="2006" name="Gram positive pathogens, 2nd edition">
        <title>The Staphylococcus aureus NCTC 8325 genome.</title>
        <editorList>
            <person name="Fischetti V."/>
            <person name="Novick R."/>
            <person name="Ferretti J."/>
            <person name="Portnoy D."/>
            <person name="Rood J."/>
        </editorList>
        <authorList>
            <person name="Gillaspy A.F."/>
            <person name="Worrell V."/>
            <person name="Orvis J."/>
            <person name="Roe B.A."/>
            <person name="Dyer D.W."/>
            <person name="Iandolo J.J."/>
        </authorList>
    </citation>
    <scope>NUCLEOTIDE SEQUENCE [LARGE SCALE GENOMIC DNA]</scope>
    <source>
        <strain>NCTC 8325 / PS 47</strain>
    </source>
</reference>
<keyword id="KW-1185">Reference proteome</keyword>
<keyword id="KW-0964">Secreted</keyword>
<sequence length="203" mass="23165">MFKKYDSKNSIVLKSILSLGIIYGGTFGIYPKADASTQNSSSVQDKQLQKVEEVPNNSEKALVKKLYDRYSKDTINGKSNKSRNWVYSERPLNENQVRIHLEGTYTVAGRVYTPKRNITLNKEVVTLKELDHIIRFAHISYGLYMGEHLPKGNIVINTKDGGKYTLESHKELQKDRENVKINTADIKNVTFKLVKSVNDIEQV</sequence>
<comment type="function">
    <text evidence="1">Plays a role in the inhibition of the host innate immune system. Inhibits phagocytosis and killing by human neutrophils by interacting with multiple neutrophil surface glycoproteins in a sialic acid-dependent manner.</text>
</comment>
<comment type="subcellular location">
    <subcellularLocation>
        <location evidence="3">Secreted</location>
    </subcellularLocation>
</comment>
<comment type="induction">
    <text evidence="1">Under the control of the Staphylococcus aureus exotoxin expression (Sae) two component gene regulatory system.</text>
</comment>
<comment type="domain">
    <text evidence="1">The C-terminal domain contains a V-shape binding site for sialyl Lewis X.</text>
</comment>
<comment type="similarity">
    <text evidence="4">Belongs to the staphylococcal/streptococcal toxin family.</text>
</comment>
<feature type="chain" id="PRO_0000447513" description="Enterotoxin-like toxin X">
    <location>
        <begin position="1"/>
        <end position="203"/>
    </location>
</feature>
<proteinExistence type="inferred from homology"/>
<name>SELX_STAA8</name>
<dbReference type="EMBL" id="CP000253">
    <property type="protein sequence ID" value="ABD29521.1"/>
    <property type="molecule type" value="Genomic_DNA"/>
</dbReference>
<dbReference type="RefSeq" id="WP_000475326.1">
    <property type="nucleotide sequence ID" value="NZ_LS483365.1"/>
</dbReference>
<dbReference type="RefSeq" id="YP_498943.1">
    <property type="nucleotide sequence ID" value="NC_007795.1"/>
</dbReference>
<dbReference type="SMR" id="Q2G107"/>
<dbReference type="PaxDb" id="1280-SAXN108_0421"/>
<dbReference type="GeneID" id="3921827"/>
<dbReference type="KEGG" id="sao:SAOUHSC_00354"/>
<dbReference type="PATRIC" id="fig|93061.5.peg.324"/>
<dbReference type="eggNOG" id="ENOG503058P">
    <property type="taxonomic scope" value="Bacteria"/>
</dbReference>
<dbReference type="HOGENOM" id="CLU_127691_0_0_9"/>
<dbReference type="OrthoDB" id="2402217at2"/>
<dbReference type="Proteomes" id="UP000008816">
    <property type="component" value="Chromosome"/>
</dbReference>
<dbReference type="GO" id="GO:0005576">
    <property type="term" value="C:extracellular region"/>
    <property type="evidence" value="ECO:0007669"/>
    <property type="project" value="UniProtKB-SubCell"/>
</dbReference>
<dbReference type="FunFam" id="3.10.20.120:FF:000002">
    <property type="entry name" value="Enterotoxin-like toxin X"/>
    <property type="match status" value="1"/>
</dbReference>
<dbReference type="Gene3D" id="3.10.20.120">
    <property type="match status" value="1"/>
</dbReference>
<dbReference type="InterPro" id="IPR016091">
    <property type="entry name" value="SuperAg_toxin_C"/>
</dbReference>
<dbReference type="InterPro" id="IPR006123">
    <property type="entry name" value="Toxin_b-grasp_Staph/Strep"/>
</dbReference>
<dbReference type="Pfam" id="PF02876">
    <property type="entry name" value="Stap_Strp_tox_C"/>
    <property type="match status" value="1"/>
</dbReference>
<dbReference type="SUPFAM" id="SSF54334">
    <property type="entry name" value="Superantigen toxins, C-terminal domain"/>
    <property type="match status" value="1"/>
</dbReference>
<evidence type="ECO:0000250" key="1">
    <source>
        <dbReference type="UniProtKB" id="A0A0H3K6X4"/>
    </source>
</evidence>
<evidence type="ECO:0000250" key="2">
    <source>
        <dbReference type="UniProtKB" id="G0Z026"/>
    </source>
</evidence>
<evidence type="ECO:0000250" key="3">
    <source>
        <dbReference type="UniProtKB" id="Q2G0X7"/>
    </source>
</evidence>
<evidence type="ECO:0000305" key="4"/>
<gene>
    <name evidence="2" type="primary">selX</name>
    <name type="ordered locus">SAOUHSC_00354</name>
</gene>